<comment type="function">
    <text evidence="2">Component of SCF(ASK-cullin-F-box) E3 ubiquitin ligase complexes, which may mediate the ubiquitination and subsequent proteasomal degradation of target proteins.</text>
</comment>
<comment type="pathway">
    <text evidence="5">Protein modification; protein ubiquitination.</text>
</comment>
<comment type="subunit">
    <text evidence="1">Part of a SCF (ASK-cullin-F-box) protein ligase complex.</text>
</comment>
<comment type="subcellular location">
    <subcellularLocation>
        <location evidence="1">Nucleus</location>
    </subcellularLocation>
</comment>
<comment type="induction">
    <text evidence="3">Not induced by auxin.</text>
</comment>
<comment type="domain">
    <text evidence="1">The F-box is necessary for the interaction with ASK proteins.</text>
</comment>
<name>AUF2_ARATH</name>
<gene>
    <name evidence="4" type="primary">AUF2</name>
    <name evidence="6" type="ordered locus">At1g22220</name>
    <name evidence="7" type="ORF">F16L1.5</name>
</gene>
<protein>
    <recommendedName>
        <fullName evidence="5">F-box protein AUF2</fullName>
    </recommendedName>
    <alternativeName>
        <fullName evidence="5">F-box protein At1g22220</fullName>
    </alternativeName>
    <alternativeName>
        <fullName evidence="4">Protein AUXIN UP-REGULATED F-BOX PROTEIN 2</fullName>
    </alternativeName>
</protein>
<organism>
    <name type="scientific">Arabidopsis thaliana</name>
    <name type="common">Mouse-ear cress</name>
    <dbReference type="NCBI Taxonomy" id="3702"/>
    <lineage>
        <taxon>Eukaryota</taxon>
        <taxon>Viridiplantae</taxon>
        <taxon>Streptophyta</taxon>
        <taxon>Embryophyta</taxon>
        <taxon>Tracheophyta</taxon>
        <taxon>Spermatophyta</taxon>
        <taxon>Magnoliopsida</taxon>
        <taxon>eudicotyledons</taxon>
        <taxon>Gunneridae</taxon>
        <taxon>Pentapetalae</taxon>
        <taxon>rosids</taxon>
        <taxon>malvids</taxon>
        <taxon>Brassicales</taxon>
        <taxon>Brassicaceae</taxon>
        <taxon>Camelineae</taxon>
        <taxon>Arabidopsis</taxon>
    </lineage>
</organism>
<accession>Q9LM18</accession>
<reference key="1">
    <citation type="journal article" date="2000" name="Nature">
        <title>Sequence and analysis of chromosome 1 of the plant Arabidopsis thaliana.</title>
        <authorList>
            <person name="Theologis A."/>
            <person name="Ecker J.R."/>
            <person name="Palm C.J."/>
            <person name="Federspiel N.A."/>
            <person name="Kaul S."/>
            <person name="White O."/>
            <person name="Alonso J."/>
            <person name="Altafi H."/>
            <person name="Araujo R."/>
            <person name="Bowman C.L."/>
            <person name="Brooks S.Y."/>
            <person name="Buehler E."/>
            <person name="Chan A."/>
            <person name="Chao Q."/>
            <person name="Chen H."/>
            <person name="Cheuk R.F."/>
            <person name="Chin C.W."/>
            <person name="Chung M.K."/>
            <person name="Conn L."/>
            <person name="Conway A.B."/>
            <person name="Conway A.R."/>
            <person name="Creasy T.H."/>
            <person name="Dewar K."/>
            <person name="Dunn P."/>
            <person name="Etgu P."/>
            <person name="Feldblyum T.V."/>
            <person name="Feng J.-D."/>
            <person name="Fong B."/>
            <person name="Fujii C.Y."/>
            <person name="Gill J.E."/>
            <person name="Goldsmith A.D."/>
            <person name="Haas B."/>
            <person name="Hansen N.F."/>
            <person name="Hughes B."/>
            <person name="Huizar L."/>
            <person name="Hunter J.L."/>
            <person name="Jenkins J."/>
            <person name="Johnson-Hopson C."/>
            <person name="Khan S."/>
            <person name="Khaykin E."/>
            <person name="Kim C.J."/>
            <person name="Koo H.L."/>
            <person name="Kremenetskaia I."/>
            <person name="Kurtz D.B."/>
            <person name="Kwan A."/>
            <person name="Lam B."/>
            <person name="Langin-Hooper S."/>
            <person name="Lee A."/>
            <person name="Lee J.M."/>
            <person name="Lenz C.A."/>
            <person name="Li J.H."/>
            <person name="Li Y.-P."/>
            <person name="Lin X."/>
            <person name="Liu S.X."/>
            <person name="Liu Z.A."/>
            <person name="Luros J.S."/>
            <person name="Maiti R."/>
            <person name="Marziali A."/>
            <person name="Militscher J."/>
            <person name="Miranda M."/>
            <person name="Nguyen M."/>
            <person name="Nierman W.C."/>
            <person name="Osborne B.I."/>
            <person name="Pai G."/>
            <person name="Peterson J."/>
            <person name="Pham P.K."/>
            <person name="Rizzo M."/>
            <person name="Rooney T."/>
            <person name="Rowley D."/>
            <person name="Sakano H."/>
            <person name="Salzberg S.L."/>
            <person name="Schwartz J.R."/>
            <person name="Shinn P."/>
            <person name="Southwick A.M."/>
            <person name="Sun H."/>
            <person name="Tallon L.J."/>
            <person name="Tambunga G."/>
            <person name="Toriumi M.J."/>
            <person name="Town C.D."/>
            <person name="Utterback T."/>
            <person name="Van Aken S."/>
            <person name="Vaysberg M."/>
            <person name="Vysotskaia V.S."/>
            <person name="Walker M."/>
            <person name="Wu D."/>
            <person name="Yu G."/>
            <person name="Fraser C.M."/>
            <person name="Venter J.C."/>
            <person name="Davis R.W."/>
        </authorList>
    </citation>
    <scope>NUCLEOTIDE SEQUENCE [LARGE SCALE GENOMIC DNA]</scope>
    <source>
        <strain>cv. Columbia</strain>
    </source>
</reference>
<reference key="2">
    <citation type="journal article" date="2017" name="Plant J.">
        <title>Araport11: a complete reannotation of the Arabidopsis thaliana reference genome.</title>
        <authorList>
            <person name="Cheng C.Y."/>
            <person name="Krishnakumar V."/>
            <person name="Chan A.P."/>
            <person name="Thibaud-Nissen F."/>
            <person name="Schobel S."/>
            <person name="Town C.D."/>
        </authorList>
    </citation>
    <scope>GENOME REANNOTATION</scope>
    <source>
        <strain>cv. Columbia</strain>
    </source>
</reference>
<reference key="3">
    <citation type="submission" date="2004-05" db="EMBL/GenBank/DDBJ databases">
        <title>Arabidopsis ORF clones.</title>
        <authorList>
            <person name="Cheuk R.F."/>
            <person name="Chen H."/>
            <person name="Kim C.J."/>
            <person name="Shinn P."/>
            <person name="Carninci P."/>
            <person name="Hayashizaki Y."/>
            <person name="Ishida J."/>
            <person name="Kamiya A."/>
            <person name="Kawai J."/>
            <person name="Narusaka M."/>
            <person name="Sakurai T."/>
            <person name="Satou M."/>
            <person name="Seki M."/>
            <person name="Shinozaki K."/>
            <person name="Ecker J.R."/>
        </authorList>
    </citation>
    <scope>NUCLEOTIDE SEQUENCE [LARGE SCALE MRNA]</scope>
    <source>
        <strain>cv. Columbia</strain>
    </source>
</reference>
<reference key="4">
    <citation type="submission" date="2004-09" db="EMBL/GenBank/DDBJ databases">
        <title>Large-scale analysis of RIKEN Arabidopsis full-length (RAFL) cDNAs.</title>
        <authorList>
            <person name="Totoki Y."/>
            <person name="Seki M."/>
            <person name="Ishida J."/>
            <person name="Nakajima M."/>
            <person name="Enju A."/>
            <person name="Kamiya A."/>
            <person name="Narusaka M."/>
            <person name="Shin-i T."/>
            <person name="Nakagawa M."/>
            <person name="Sakamoto N."/>
            <person name="Oishi K."/>
            <person name="Kohara Y."/>
            <person name="Kobayashi M."/>
            <person name="Toyoda A."/>
            <person name="Sakaki Y."/>
            <person name="Sakurai T."/>
            <person name="Iida K."/>
            <person name="Akiyama K."/>
            <person name="Satou M."/>
            <person name="Toyoda T."/>
            <person name="Konagaya A."/>
            <person name="Carninci P."/>
            <person name="Kawai J."/>
            <person name="Hayashizaki Y."/>
            <person name="Shinozaki K."/>
        </authorList>
    </citation>
    <scope>NUCLEOTIDE SEQUENCE [LARGE SCALE MRNA]</scope>
    <source>
        <strain>cv. Columbia</strain>
    </source>
</reference>
<reference key="5">
    <citation type="journal article" date="2011" name="Plant Physiol.">
        <title>AUXIN UP-REGULATED F-BOX PROTEIN1 regulates the cross talk between auxin transport and cytokinin signaling during plant root growth.</title>
        <authorList>
            <person name="Zheng X."/>
            <person name="Miller N.D."/>
            <person name="Lewis D.R."/>
            <person name="Christians M.J."/>
            <person name="Lee K.H."/>
            <person name="Muday G.K."/>
            <person name="Spalding E.P."/>
            <person name="Vierstra R.D."/>
        </authorList>
    </citation>
    <scope>INDUCTION</scope>
</reference>
<evidence type="ECO:0000250" key="1">
    <source>
        <dbReference type="UniProtKB" id="Q8LEA8"/>
    </source>
</evidence>
<evidence type="ECO:0000250" key="2">
    <source>
        <dbReference type="UniProtKB" id="Q9SRV0"/>
    </source>
</evidence>
<evidence type="ECO:0000269" key="3">
    <source>
    </source>
</evidence>
<evidence type="ECO:0000303" key="4">
    <source>
    </source>
</evidence>
<evidence type="ECO:0000305" key="5"/>
<evidence type="ECO:0000312" key="6">
    <source>
        <dbReference type="Araport" id="AT1G22220"/>
    </source>
</evidence>
<evidence type="ECO:0000312" key="7">
    <source>
        <dbReference type="EMBL" id="AAF87851.1"/>
    </source>
</evidence>
<feature type="chain" id="PRO_0000283569" description="F-box protein AUF2">
    <location>
        <begin position="1"/>
        <end position="314"/>
    </location>
</feature>
<feature type="domain" description="F-box">
    <location>
        <begin position="1"/>
        <end position="49"/>
    </location>
</feature>
<dbReference type="EMBL" id="AC073942">
    <property type="protein sequence ID" value="AAF87851.1"/>
    <property type="molecule type" value="Genomic_DNA"/>
</dbReference>
<dbReference type="EMBL" id="CP002684">
    <property type="protein sequence ID" value="AEE30213.1"/>
    <property type="molecule type" value="Genomic_DNA"/>
</dbReference>
<dbReference type="EMBL" id="BT012651">
    <property type="protein sequence ID" value="AAT06470.1"/>
    <property type="molecule type" value="mRNA"/>
</dbReference>
<dbReference type="EMBL" id="AK176237">
    <property type="protein sequence ID" value="BAD44000.1"/>
    <property type="molecule type" value="mRNA"/>
</dbReference>
<dbReference type="PIR" id="H86354">
    <property type="entry name" value="H86354"/>
</dbReference>
<dbReference type="RefSeq" id="NP_173641.1">
    <property type="nucleotide sequence ID" value="NM_102072.4"/>
</dbReference>
<dbReference type="BioGRID" id="24066">
    <property type="interactions" value="7"/>
</dbReference>
<dbReference type="IntAct" id="Q9LM18">
    <property type="interactions" value="1"/>
</dbReference>
<dbReference type="STRING" id="3702.Q9LM18"/>
<dbReference type="PaxDb" id="3702-AT1G22220.1"/>
<dbReference type="EnsemblPlants" id="AT1G22220.1">
    <property type="protein sequence ID" value="AT1G22220.1"/>
    <property type="gene ID" value="AT1G22220"/>
</dbReference>
<dbReference type="GeneID" id="838827"/>
<dbReference type="Gramene" id="AT1G22220.1">
    <property type="protein sequence ID" value="AT1G22220.1"/>
    <property type="gene ID" value="AT1G22220"/>
</dbReference>
<dbReference type="KEGG" id="ath:AT1G22220"/>
<dbReference type="Araport" id="AT1G22220"/>
<dbReference type="TAIR" id="AT1G22220">
    <property type="gene designation" value="AUF2"/>
</dbReference>
<dbReference type="eggNOG" id="ENOG502QV7H">
    <property type="taxonomic scope" value="Eukaryota"/>
</dbReference>
<dbReference type="HOGENOM" id="CLU_049279_2_0_1"/>
<dbReference type="InParanoid" id="Q9LM18"/>
<dbReference type="OMA" id="RHYLMRE"/>
<dbReference type="PhylomeDB" id="Q9LM18"/>
<dbReference type="UniPathway" id="UPA00143"/>
<dbReference type="PRO" id="PR:Q9LM18"/>
<dbReference type="Proteomes" id="UP000006548">
    <property type="component" value="Chromosome 1"/>
</dbReference>
<dbReference type="ExpressionAtlas" id="Q9LM18">
    <property type="expression patterns" value="baseline and differential"/>
</dbReference>
<dbReference type="GO" id="GO:0005634">
    <property type="term" value="C:nucleus"/>
    <property type="evidence" value="ECO:0007669"/>
    <property type="project" value="UniProtKB-SubCell"/>
</dbReference>
<dbReference type="GO" id="GO:0009506">
    <property type="term" value="C:plasmodesma"/>
    <property type="evidence" value="ECO:0007005"/>
    <property type="project" value="TAIR"/>
</dbReference>
<dbReference type="GO" id="GO:0071456">
    <property type="term" value="P:cellular response to hypoxia"/>
    <property type="evidence" value="ECO:0007007"/>
    <property type="project" value="TAIR"/>
</dbReference>
<dbReference type="GO" id="GO:0016567">
    <property type="term" value="P:protein ubiquitination"/>
    <property type="evidence" value="ECO:0007669"/>
    <property type="project" value="UniProtKB-UniPathway"/>
</dbReference>
<dbReference type="InterPro" id="IPR044809">
    <property type="entry name" value="AUF1-like"/>
</dbReference>
<dbReference type="InterPro" id="IPR036047">
    <property type="entry name" value="F-box-like_dom_sf"/>
</dbReference>
<dbReference type="InterPro" id="IPR001810">
    <property type="entry name" value="F-box_dom"/>
</dbReference>
<dbReference type="PANTHER" id="PTHR31215">
    <property type="entry name" value="OS05G0510400 PROTEIN-RELATED"/>
    <property type="match status" value="1"/>
</dbReference>
<dbReference type="Pfam" id="PF00646">
    <property type="entry name" value="F-box"/>
    <property type="match status" value="1"/>
</dbReference>
<dbReference type="SUPFAM" id="SSF81383">
    <property type="entry name" value="F-box domain"/>
    <property type="match status" value="1"/>
</dbReference>
<proteinExistence type="evidence at transcript level"/>
<sequence>MDVFDGLPDPIIVDILNKVGDVKTLLRCSSLSKRFNSLVPQSESLTLRLDHSVSDSPVVTSIFRSLFNGLVSLLSKPAKPITITTLSPSLPFKILSRFDRIRNLDVELPGGDVKLEKGAAVKWKAEFGKTLKSCVIVAFRSAGTVSSPVAVEGESDAEFVTGLKTRVVWTISALMAASSRHYLMREVVKEHEEIESLVMRDKEREGTVVMNEEGLKELRNTEARVEDEERVVKNKRSVVPSVRMSMRHAPSLKLKSGICLESATLVIVRPSGADFEVGDDAELATEAFVGDCMYGEAVVALLKCKKNALEMNSF</sequence>
<keyword id="KW-0539">Nucleus</keyword>
<keyword id="KW-1185">Reference proteome</keyword>
<keyword id="KW-0833">Ubl conjugation pathway</keyword>